<gene>
    <name type="primary">RpS29</name>
</gene>
<comment type="cofactor">
    <cofactor evidence="1">
        <name>Zn(2+)</name>
        <dbReference type="ChEBI" id="CHEBI:29105"/>
    </cofactor>
    <text evidence="1">Binds 1 zinc ion per subunit.</text>
</comment>
<comment type="subunit">
    <text evidence="3">Component of the 40S small ribosomal subunit.</text>
</comment>
<comment type="subcellular location">
    <subcellularLocation>
        <location evidence="1">Cytoplasm</location>
        <location evidence="1">Cytosol</location>
    </subcellularLocation>
    <subcellularLocation>
        <location evidence="1">Cytoplasm</location>
    </subcellularLocation>
    <subcellularLocation>
        <location evidence="2">Rough endoplasmic reticulum</location>
    </subcellularLocation>
    <text evidence="1 2">Detected on cytosolic polysomes (By similarity). Detected in ribosomes that are associated with the rough endoplasmic reticulum (By similarity).</text>
</comment>
<comment type="similarity">
    <text evidence="5">Belongs to the universal ribosomal protein uS14 family.</text>
</comment>
<protein>
    <recommendedName>
        <fullName evidence="5">Small ribosomal subunit protein uS14</fullName>
    </recommendedName>
    <alternativeName>
        <fullName>40S ribosomal protein S29</fullName>
    </alternativeName>
</protein>
<organism>
    <name type="scientific">Lysiphlebus testaceipes</name>
    <name type="common">Greenbugs aphid parastoid</name>
    <dbReference type="NCBI Taxonomy" id="77504"/>
    <lineage>
        <taxon>Eukaryota</taxon>
        <taxon>Metazoa</taxon>
        <taxon>Ecdysozoa</taxon>
        <taxon>Arthropoda</taxon>
        <taxon>Hexapoda</taxon>
        <taxon>Insecta</taxon>
        <taxon>Pterygota</taxon>
        <taxon>Neoptera</taxon>
        <taxon>Endopterygota</taxon>
        <taxon>Hymenoptera</taxon>
        <taxon>Apocrita</taxon>
        <taxon>Ichneumonoidea</taxon>
        <taxon>Braconidae</taxon>
        <taxon>Aphidiinae</taxon>
        <taxon>Lysiphlebus</taxon>
    </lineage>
</organism>
<evidence type="ECO:0000250" key="1">
    <source>
        <dbReference type="UniProtKB" id="P62273"/>
    </source>
</evidence>
<evidence type="ECO:0000250" key="2">
    <source>
        <dbReference type="UniProtKB" id="Q6QAP6"/>
    </source>
</evidence>
<evidence type="ECO:0000250" key="3">
    <source>
        <dbReference type="UniProtKB" id="Q9VH69"/>
    </source>
</evidence>
<evidence type="ECO:0000255" key="4"/>
<evidence type="ECO:0000305" key="5"/>
<reference key="1">
    <citation type="submission" date="2005-03" db="EMBL/GenBank/DDBJ databases">
        <title>Ribosomal protein sequences from Lysiphlebus testaceipes.</title>
        <authorList>
            <person name="Weathersbee A.A. III"/>
            <person name="Hunter W.B."/>
            <person name="Panchal T.D."/>
            <person name="Dang P.M."/>
        </authorList>
    </citation>
    <scope>NUCLEOTIDE SEQUENCE [MRNA]</scope>
    <source>
        <strain>Florida</strain>
    </source>
</reference>
<feature type="chain" id="PRO_0000268805" description="Small ribosomal subunit protein uS14">
    <location>
        <begin position="1"/>
        <end position="56"/>
    </location>
</feature>
<feature type="binding site" evidence="4">
    <location>
        <position position="21"/>
    </location>
    <ligand>
        <name>Zn(2+)</name>
        <dbReference type="ChEBI" id="CHEBI:29105"/>
    </ligand>
</feature>
<feature type="binding site" evidence="4">
    <location>
        <position position="24"/>
    </location>
    <ligand>
        <name>Zn(2+)</name>
        <dbReference type="ChEBI" id="CHEBI:29105"/>
    </ligand>
</feature>
<feature type="binding site" evidence="4">
    <location>
        <position position="39"/>
    </location>
    <ligand>
        <name>Zn(2+)</name>
        <dbReference type="ChEBI" id="CHEBI:29105"/>
    </ligand>
</feature>
<feature type="binding site" evidence="4">
    <location>
        <position position="42"/>
    </location>
    <ligand>
        <name>Zn(2+)</name>
        <dbReference type="ChEBI" id="CHEBI:29105"/>
    </ligand>
</feature>
<dbReference type="EMBL" id="AY961488">
    <property type="protein sequence ID" value="AAX62390.1"/>
    <property type="molecule type" value="mRNA"/>
</dbReference>
<dbReference type="SMR" id="Q56FL2"/>
<dbReference type="GO" id="GO:0022627">
    <property type="term" value="C:cytosolic small ribosomal subunit"/>
    <property type="evidence" value="ECO:0000250"/>
    <property type="project" value="UniProtKB"/>
</dbReference>
<dbReference type="GO" id="GO:0005840">
    <property type="term" value="C:ribosome"/>
    <property type="evidence" value="ECO:0000250"/>
    <property type="project" value="UniProtKB"/>
</dbReference>
<dbReference type="GO" id="GO:0005791">
    <property type="term" value="C:rough endoplasmic reticulum"/>
    <property type="evidence" value="ECO:0007669"/>
    <property type="project" value="UniProtKB-SubCell"/>
</dbReference>
<dbReference type="GO" id="GO:0003735">
    <property type="term" value="F:structural constituent of ribosome"/>
    <property type="evidence" value="ECO:0007669"/>
    <property type="project" value="InterPro"/>
</dbReference>
<dbReference type="GO" id="GO:0008270">
    <property type="term" value="F:zinc ion binding"/>
    <property type="evidence" value="ECO:0000250"/>
    <property type="project" value="UniProtKB"/>
</dbReference>
<dbReference type="GO" id="GO:0002181">
    <property type="term" value="P:cytoplasmic translation"/>
    <property type="evidence" value="ECO:0000250"/>
    <property type="project" value="UniProtKB"/>
</dbReference>
<dbReference type="FunFam" id="4.10.830.10:FF:000002">
    <property type="entry name" value="40S ribosomal protein S29"/>
    <property type="match status" value="1"/>
</dbReference>
<dbReference type="Gene3D" id="4.10.830.10">
    <property type="entry name" value="30s Ribosomal Protein S14, Chain N"/>
    <property type="match status" value="1"/>
</dbReference>
<dbReference type="InterPro" id="IPR001209">
    <property type="entry name" value="Ribosomal_uS14"/>
</dbReference>
<dbReference type="InterPro" id="IPR018271">
    <property type="entry name" value="Ribosomal_uS14_CS"/>
</dbReference>
<dbReference type="InterPro" id="IPR039744">
    <property type="entry name" value="RIbosomal_uS14_euk_arc"/>
</dbReference>
<dbReference type="InterPro" id="IPR043140">
    <property type="entry name" value="Ribosomal_uS14_sf"/>
</dbReference>
<dbReference type="NCBIfam" id="NF004424">
    <property type="entry name" value="PRK05766.1"/>
    <property type="match status" value="1"/>
</dbReference>
<dbReference type="PANTHER" id="PTHR12010">
    <property type="entry name" value="40S RIBOSOMAL PROTEIN S29"/>
    <property type="match status" value="1"/>
</dbReference>
<dbReference type="PANTHER" id="PTHR12010:SF2">
    <property type="entry name" value="40S RIBOSOMAL PROTEIN S29"/>
    <property type="match status" value="1"/>
</dbReference>
<dbReference type="Pfam" id="PF00253">
    <property type="entry name" value="Ribosomal_S14"/>
    <property type="match status" value="1"/>
</dbReference>
<dbReference type="PROSITE" id="PS00527">
    <property type="entry name" value="RIBOSOMAL_S14"/>
    <property type="match status" value="1"/>
</dbReference>
<accession>Q56FL2</accession>
<keyword id="KW-0963">Cytoplasm</keyword>
<keyword id="KW-0256">Endoplasmic reticulum</keyword>
<keyword id="KW-0479">Metal-binding</keyword>
<keyword id="KW-0687">Ribonucleoprotein</keyword>
<keyword id="KW-0689">Ribosomal protein</keyword>
<keyword id="KW-0862">Zinc</keyword>
<proteinExistence type="inferred from homology"/>
<name>RS29_LYSTE</name>
<sequence length="56" mass="6575">MGFENIWFSHPRKYGQGSRSCRSCANKHGIIRKYGLNICRQCFREYASDIGFKKLD</sequence>